<organism>
    <name type="scientific">Schizosaccharomyces pombe (strain 972 / ATCC 24843)</name>
    <name type="common">Fission yeast</name>
    <dbReference type="NCBI Taxonomy" id="284812"/>
    <lineage>
        <taxon>Eukaryota</taxon>
        <taxon>Fungi</taxon>
        <taxon>Dikarya</taxon>
        <taxon>Ascomycota</taxon>
        <taxon>Taphrinomycotina</taxon>
        <taxon>Schizosaccharomycetes</taxon>
        <taxon>Schizosaccharomycetales</taxon>
        <taxon>Schizosaccharomycetaceae</taxon>
        <taxon>Schizosaccharomyces</taxon>
    </lineage>
</organism>
<keyword id="KW-0131">Cell cycle</keyword>
<keyword id="KW-0132">Cell division</keyword>
<keyword id="KW-0963">Cytoplasm</keyword>
<keyword id="KW-0206">Cytoskeleton</keyword>
<keyword id="KW-0493">Microtubule</keyword>
<keyword id="KW-0498">Mitosis</keyword>
<keyword id="KW-0539">Nucleus</keyword>
<keyword id="KW-1185">Reference proteome</keyword>
<protein>
    <recommendedName>
        <fullName>Nuclear movement protein nudc</fullName>
    </recommendedName>
    <alternativeName>
        <fullName>Nuclear distribution protein C homolog</fullName>
    </alternativeName>
</protein>
<name>NUDC_SCHPO</name>
<proteinExistence type="inferred from homology"/>
<dbReference type="EMBL" id="CU329671">
    <property type="protein sequence ID" value="CAA19122.1"/>
    <property type="molecule type" value="Genomic_DNA"/>
</dbReference>
<dbReference type="PIR" id="T39825">
    <property type="entry name" value="T39825"/>
</dbReference>
<dbReference type="SMR" id="O60166"/>
<dbReference type="BioGRID" id="277259">
    <property type="interactions" value="30"/>
</dbReference>
<dbReference type="FunCoup" id="O60166">
    <property type="interactions" value="764"/>
</dbReference>
<dbReference type="STRING" id="284812.O60166"/>
<dbReference type="iPTMnet" id="O60166"/>
<dbReference type="PaxDb" id="4896-SPBC19F8.02.1"/>
<dbReference type="EnsemblFungi" id="SPBC19F8.02.1">
    <property type="protein sequence ID" value="SPBC19F8.02.1:pep"/>
    <property type="gene ID" value="SPBC19F8.02"/>
</dbReference>
<dbReference type="KEGG" id="spo:2540736"/>
<dbReference type="PomBase" id="SPBC19F8.02"/>
<dbReference type="VEuPathDB" id="FungiDB:SPBC19F8.02"/>
<dbReference type="eggNOG" id="KOG2265">
    <property type="taxonomic scope" value="Eukaryota"/>
</dbReference>
<dbReference type="HOGENOM" id="CLU_047332_2_0_1"/>
<dbReference type="InParanoid" id="O60166"/>
<dbReference type="OMA" id="RQKEMGG"/>
<dbReference type="PhylomeDB" id="O60166"/>
<dbReference type="Reactome" id="R-SPO-9648025">
    <property type="pathway name" value="EML4 and NUDC in mitotic spindle formation"/>
</dbReference>
<dbReference type="Reactome" id="R-SPO-9696270">
    <property type="pathway name" value="RND2 GTPase cycle"/>
</dbReference>
<dbReference type="PRO" id="PR:O60166"/>
<dbReference type="Proteomes" id="UP000002485">
    <property type="component" value="Chromosome II"/>
</dbReference>
<dbReference type="GO" id="GO:0005737">
    <property type="term" value="C:cytoplasm"/>
    <property type="evidence" value="ECO:0000318"/>
    <property type="project" value="GO_Central"/>
</dbReference>
<dbReference type="GO" id="GO:0005874">
    <property type="term" value="C:microtubule"/>
    <property type="evidence" value="ECO:0007669"/>
    <property type="project" value="UniProtKB-KW"/>
</dbReference>
<dbReference type="GO" id="GO:0005634">
    <property type="term" value="C:nucleus"/>
    <property type="evidence" value="ECO:0007669"/>
    <property type="project" value="UniProtKB-SubCell"/>
</dbReference>
<dbReference type="GO" id="GO:0051082">
    <property type="term" value="F:unfolded protein binding"/>
    <property type="evidence" value="ECO:0000318"/>
    <property type="project" value="GO_Central"/>
</dbReference>
<dbReference type="GO" id="GO:0051301">
    <property type="term" value="P:cell division"/>
    <property type="evidence" value="ECO:0007669"/>
    <property type="project" value="UniProtKB-KW"/>
</dbReference>
<dbReference type="GO" id="GO:0006457">
    <property type="term" value="P:protein folding"/>
    <property type="evidence" value="ECO:0000318"/>
    <property type="project" value="GO_Central"/>
</dbReference>
<dbReference type="CDD" id="cd06467">
    <property type="entry name" value="p23_NUDC_like"/>
    <property type="match status" value="1"/>
</dbReference>
<dbReference type="FunFam" id="2.60.40.790:FF:000001">
    <property type="entry name" value="Nuclear migration protein nudC"/>
    <property type="match status" value="1"/>
</dbReference>
<dbReference type="Gene3D" id="2.60.40.790">
    <property type="match status" value="1"/>
</dbReference>
<dbReference type="InterPro" id="IPR007052">
    <property type="entry name" value="CS_dom"/>
</dbReference>
<dbReference type="InterPro" id="IPR008978">
    <property type="entry name" value="HSP20-like_chaperone"/>
</dbReference>
<dbReference type="InterPro" id="IPR037898">
    <property type="entry name" value="NudC_fam"/>
</dbReference>
<dbReference type="PANTHER" id="PTHR12356:SF3">
    <property type="entry name" value="NUCLEAR MIGRATION PROTEIN NUDC"/>
    <property type="match status" value="1"/>
</dbReference>
<dbReference type="PANTHER" id="PTHR12356">
    <property type="entry name" value="NUCLEAR MOVEMENT PROTEIN NUDC"/>
    <property type="match status" value="1"/>
</dbReference>
<dbReference type="Pfam" id="PF04969">
    <property type="entry name" value="CS"/>
    <property type="match status" value="1"/>
</dbReference>
<dbReference type="SUPFAM" id="SSF49764">
    <property type="entry name" value="HSP20-like chaperones"/>
    <property type="match status" value="1"/>
</dbReference>
<dbReference type="PROSITE" id="PS51203">
    <property type="entry name" value="CS"/>
    <property type="match status" value="1"/>
</dbReference>
<accession>O60166</accession>
<gene>
    <name type="primary">nudc</name>
    <name type="ORF">SPBC19F8.02</name>
</gene>
<reference key="1">
    <citation type="journal article" date="2002" name="Nature">
        <title>The genome sequence of Schizosaccharomyces pombe.</title>
        <authorList>
            <person name="Wood V."/>
            <person name="Gwilliam R."/>
            <person name="Rajandream M.A."/>
            <person name="Lyne M.H."/>
            <person name="Lyne R."/>
            <person name="Stewart A."/>
            <person name="Sgouros J.G."/>
            <person name="Peat N."/>
            <person name="Hayles J."/>
            <person name="Baker S.G."/>
            <person name="Basham D."/>
            <person name="Bowman S."/>
            <person name="Brooks K."/>
            <person name="Brown D."/>
            <person name="Brown S."/>
            <person name="Chillingworth T."/>
            <person name="Churcher C.M."/>
            <person name="Collins M."/>
            <person name="Connor R."/>
            <person name="Cronin A."/>
            <person name="Davis P."/>
            <person name="Feltwell T."/>
            <person name="Fraser A."/>
            <person name="Gentles S."/>
            <person name="Goble A."/>
            <person name="Hamlin N."/>
            <person name="Harris D.E."/>
            <person name="Hidalgo J."/>
            <person name="Hodgson G."/>
            <person name="Holroyd S."/>
            <person name="Hornsby T."/>
            <person name="Howarth S."/>
            <person name="Huckle E.J."/>
            <person name="Hunt S."/>
            <person name="Jagels K."/>
            <person name="James K.D."/>
            <person name="Jones L."/>
            <person name="Jones M."/>
            <person name="Leather S."/>
            <person name="McDonald S."/>
            <person name="McLean J."/>
            <person name="Mooney P."/>
            <person name="Moule S."/>
            <person name="Mungall K.L."/>
            <person name="Murphy L.D."/>
            <person name="Niblett D."/>
            <person name="Odell C."/>
            <person name="Oliver K."/>
            <person name="O'Neil S."/>
            <person name="Pearson D."/>
            <person name="Quail M.A."/>
            <person name="Rabbinowitsch E."/>
            <person name="Rutherford K.M."/>
            <person name="Rutter S."/>
            <person name="Saunders D."/>
            <person name="Seeger K."/>
            <person name="Sharp S."/>
            <person name="Skelton J."/>
            <person name="Simmonds M.N."/>
            <person name="Squares R."/>
            <person name="Squares S."/>
            <person name="Stevens K."/>
            <person name="Taylor K."/>
            <person name="Taylor R.G."/>
            <person name="Tivey A."/>
            <person name="Walsh S.V."/>
            <person name="Warren T."/>
            <person name="Whitehead S."/>
            <person name="Woodward J.R."/>
            <person name="Volckaert G."/>
            <person name="Aert R."/>
            <person name="Robben J."/>
            <person name="Grymonprez B."/>
            <person name="Weltjens I."/>
            <person name="Vanstreels E."/>
            <person name="Rieger M."/>
            <person name="Schaefer M."/>
            <person name="Mueller-Auer S."/>
            <person name="Gabel C."/>
            <person name="Fuchs M."/>
            <person name="Duesterhoeft A."/>
            <person name="Fritzc C."/>
            <person name="Holzer E."/>
            <person name="Moestl D."/>
            <person name="Hilbert H."/>
            <person name="Borzym K."/>
            <person name="Langer I."/>
            <person name="Beck A."/>
            <person name="Lehrach H."/>
            <person name="Reinhardt R."/>
            <person name="Pohl T.M."/>
            <person name="Eger P."/>
            <person name="Zimmermann W."/>
            <person name="Wedler H."/>
            <person name="Wambutt R."/>
            <person name="Purnelle B."/>
            <person name="Goffeau A."/>
            <person name="Cadieu E."/>
            <person name="Dreano S."/>
            <person name="Gloux S."/>
            <person name="Lelaure V."/>
            <person name="Mottier S."/>
            <person name="Galibert F."/>
            <person name="Aves S.J."/>
            <person name="Xiang Z."/>
            <person name="Hunt C."/>
            <person name="Moore K."/>
            <person name="Hurst S.M."/>
            <person name="Lucas M."/>
            <person name="Rochet M."/>
            <person name="Gaillardin C."/>
            <person name="Tallada V.A."/>
            <person name="Garzon A."/>
            <person name="Thode G."/>
            <person name="Daga R.R."/>
            <person name="Cruzado L."/>
            <person name="Jimenez J."/>
            <person name="Sanchez M."/>
            <person name="del Rey F."/>
            <person name="Benito J."/>
            <person name="Dominguez A."/>
            <person name="Revuelta J.L."/>
            <person name="Moreno S."/>
            <person name="Armstrong J."/>
            <person name="Forsburg S.L."/>
            <person name="Cerutti L."/>
            <person name="Lowe T."/>
            <person name="McCombie W.R."/>
            <person name="Paulsen I."/>
            <person name="Potashkin J."/>
            <person name="Shpakovski G.V."/>
            <person name="Ussery D."/>
            <person name="Barrell B.G."/>
            <person name="Nurse P."/>
        </authorList>
    </citation>
    <scope>NUCLEOTIDE SEQUENCE [LARGE SCALE GENOMIC DNA]</scope>
    <source>
        <strain>972 / ATCC 24843</strain>
    </source>
</reference>
<reference key="2">
    <citation type="journal article" date="2006" name="Nat. Biotechnol.">
        <title>ORFeome cloning and global analysis of protein localization in the fission yeast Schizosaccharomyces pombe.</title>
        <authorList>
            <person name="Matsuyama A."/>
            <person name="Arai R."/>
            <person name="Yashiroda Y."/>
            <person name="Shirai A."/>
            <person name="Kamata A."/>
            <person name="Sekido S."/>
            <person name="Kobayashi Y."/>
            <person name="Hashimoto A."/>
            <person name="Hamamoto M."/>
            <person name="Hiraoka Y."/>
            <person name="Horinouchi S."/>
            <person name="Yoshida M."/>
        </authorList>
    </citation>
    <scope>SUBCELLULAR LOCATION [LARGE SCALE ANALYSIS]</scope>
</reference>
<evidence type="ECO:0000250" key="1"/>
<evidence type="ECO:0000255" key="2">
    <source>
        <dbReference type="PROSITE-ProRule" id="PRU00547"/>
    </source>
</evidence>
<evidence type="ECO:0000269" key="3">
    <source>
    </source>
</evidence>
<evidence type="ECO:0000305" key="4"/>
<comment type="function">
    <text evidence="1">Required for nuclear movement. May interact between microtubules and nuclei and/or may be involved in the generation of force used to move nuclei during interphase (By similarity).</text>
</comment>
<comment type="subcellular location">
    <subcellularLocation>
        <location evidence="3">Cytoplasm</location>
        <location evidence="3">Cytoskeleton</location>
    </subcellularLocation>
    <subcellularLocation>
        <location evidence="3">Nucleus</location>
    </subcellularLocation>
</comment>
<comment type="similarity">
    <text evidence="4">Belongs to the nudC family.</text>
</comment>
<sequence>MHQVKLEEAEYEWDQTIADVDIVIHVPKGTRAKSLQVDMSNHDLKIQINVPERKVLLSGPLEKQINLDESTWTVEEQERLVIHLEKSNKMEWWSCVIKGHPSIDIGSIEPENSKLSDLDEETRATVEKMMLEQSQKRTDEQKRKDVLQNFMKQHPELDFSNVRDQI</sequence>
<feature type="chain" id="PRO_0000310342" description="Nuclear movement protein nudc">
    <location>
        <begin position="1"/>
        <end position="166"/>
    </location>
</feature>
<feature type="domain" description="CS" evidence="2">
    <location>
        <begin position="6"/>
        <end position="97"/>
    </location>
</feature>